<name>GUAA_SHEHH</name>
<protein>
    <recommendedName>
        <fullName evidence="1">GMP synthase [glutamine-hydrolyzing]</fullName>
        <ecNumber evidence="1">6.3.5.2</ecNumber>
    </recommendedName>
    <alternativeName>
        <fullName evidence="1">GMP synthetase</fullName>
    </alternativeName>
    <alternativeName>
        <fullName evidence="1">Glutamine amidotransferase</fullName>
    </alternativeName>
</protein>
<comment type="function">
    <text evidence="1">Catalyzes the synthesis of GMP from XMP.</text>
</comment>
<comment type="catalytic activity">
    <reaction evidence="1">
        <text>XMP + L-glutamine + ATP + H2O = GMP + L-glutamate + AMP + diphosphate + 2 H(+)</text>
        <dbReference type="Rhea" id="RHEA:11680"/>
        <dbReference type="ChEBI" id="CHEBI:15377"/>
        <dbReference type="ChEBI" id="CHEBI:15378"/>
        <dbReference type="ChEBI" id="CHEBI:29985"/>
        <dbReference type="ChEBI" id="CHEBI:30616"/>
        <dbReference type="ChEBI" id="CHEBI:33019"/>
        <dbReference type="ChEBI" id="CHEBI:57464"/>
        <dbReference type="ChEBI" id="CHEBI:58115"/>
        <dbReference type="ChEBI" id="CHEBI:58359"/>
        <dbReference type="ChEBI" id="CHEBI:456215"/>
        <dbReference type="EC" id="6.3.5.2"/>
    </reaction>
</comment>
<comment type="pathway">
    <text evidence="1">Purine metabolism; GMP biosynthesis; GMP from XMP (L-Gln route): step 1/1.</text>
</comment>
<comment type="subunit">
    <text evidence="1">Homodimer.</text>
</comment>
<organism>
    <name type="scientific">Shewanella halifaxensis (strain HAW-EB4)</name>
    <dbReference type="NCBI Taxonomy" id="458817"/>
    <lineage>
        <taxon>Bacteria</taxon>
        <taxon>Pseudomonadati</taxon>
        <taxon>Pseudomonadota</taxon>
        <taxon>Gammaproteobacteria</taxon>
        <taxon>Alteromonadales</taxon>
        <taxon>Shewanellaceae</taxon>
        <taxon>Shewanella</taxon>
    </lineage>
</organism>
<proteinExistence type="inferred from homology"/>
<gene>
    <name evidence="1" type="primary">guaA</name>
    <name type="ordered locus">Shal_1377</name>
</gene>
<keyword id="KW-0067">ATP-binding</keyword>
<keyword id="KW-0315">Glutamine amidotransferase</keyword>
<keyword id="KW-0332">GMP biosynthesis</keyword>
<keyword id="KW-0436">Ligase</keyword>
<keyword id="KW-0547">Nucleotide-binding</keyword>
<keyword id="KW-0658">Purine biosynthesis</keyword>
<accession>B0TLJ4</accession>
<reference key="1">
    <citation type="submission" date="2008-01" db="EMBL/GenBank/DDBJ databases">
        <title>Complete sequence of Shewanella halifaxensis HAW-EB4.</title>
        <authorList>
            <consortium name="US DOE Joint Genome Institute"/>
            <person name="Copeland A."/>
            <person name="Lucas S."/>
            <person name="Lapidus A."/>
            <person name="Glavina del Rio T."/>
            <person name="Dalin E."/>
            <person name="Tice H."/>
            <person name="Bruce D."/>
            <person name="Goodwin L."/>
            <person name="Pitluck S."/>
            <person name="Sims D."/>
            <person name="Brettin T."/>
            <person name="Detter J.C."/>
            <person name="Han C."/>
            <person name="Kuske C.R."/>
            <person name="Schmutz J."/>
            <person name="Larimer F."/>
            <person name="Land M."/>
            <person name="Hauser L."/>
            <person name="Kyrpides N."/>
            <person name="Kim E."/>
            <person name="Zhao J.-S."/>
            <person name="Richardson P."/>
        </authorList>
    </citation>
    <scope>NUCLEOTIDE SEQUENCE [LARGE SCALE GENOMIC DNA]</scope>
    <source>
        <strain>HAW-EB4</strain>
    </source>
</reference>
<feature type="chain" id="PRO_1000120403" description="GMP synthase [glutamine-hydrolyzing]">
    <location>
        <begin position="1"/>
        <end position="525"/>
    </location>
</feature>
<feature type="domain" description="Glutamine amidotransferase type-1" evidence="1">
    <location>
        <begin position="8"/>
        <end position="207"/>
    </location>
</feature>
<feature type="domain" description="GMPS ATP-PPase" evidence="1">
    <location>
        <begin position="208"/>
        <end position="400"/>
    </location>
</feature>
<feature type="active site" description="Nucleophile" evidence="1">
    <location>
        <position position="85"/>
    </location>
</feature>
<feature type="active site" evidence="1">
    <location>
        <position position="181"/>
    </location>
</feature>
<feature type="active site" evidence="1">
    <location>
        <position position="183"/>
    </location>
</feature>
<feature type="binding site" evidence="1">
    <location>
        <begin position="235"/>
        <end position="241"/>
    </location>
    <ligand>
        <name>ATP</name>
        <dbReference type="ChEBI" id="CHEBI:30616"/>
    </ligand>
</feature>
<dbReference type="EC" id="6.3.5.2" evidence="1"/>
<dbReference type="EMBL" id="CP000931">
    <property type="protein sequence ID" value="ABZ75944.1"/>
    <property type="molecule type" value="Genomic_DNA"/>
</dbReference>
<dbReference type="RefSeq" id="WP_012276484.1">
    <property type="nucleotide sequence ID" value="NC_010334.1"/>
</dbReference>
<dbReference type="SMR" id="B0TLJ4"/>
<dbReference type="STRING" id="458817.Shal_1377"/>
<dbReference type="KEGG" id="shl:Shal_1377"/>
<dbReference type="eggNOG" id="COG0518">
    <property type="taxonomic scope" value="Bacteria"/>
</dbReference>
<dbReference type="eggNOG" id="COG0519">
    <property type="taxonomic scope" value="Bacteria"/>
</dbReference>
<dbReference type="HOGENOM" id="CLU_014340_0_5_6"/>
<dbReference type="OrthoDB" id="9802219at2"/>
<dbReference type="UniPathway" id="UPA00189">
    <property type="reaction ID" value="UER00296"/>
</dbReference>
<dbReference type="Proteomes" id="UP000001317">
    <property type="component" value="Chromosome"/>
</dbReference>
<dbReference type="GO" id="GO:0005829">
    <property type="term" value="C:cytosol"/>
    <property type="evidence" value="ECO:0007669"/>
    <property type="project" value="TreeGrafter"/>
</dbReference>
<dbReference type="GO" id="GO:0005524">
    <property type="term" value="F:ATP binding"/>
    <property type="evidence" value="ECO:0007669"/>
    <property type="project" value="UniProtKB-UniRule"/>
</dbReference>
<dbReference type="GO" id="GO:0003921">
    <property type="term" value="F:GMP synthase activity"/>
    <property type="evidence" value="ECO:0007669"/>
    <property type="project" value="InterPro"/>
</dbReference>
<dbReference type="CDD" id="cd01742">
    <property type="entry name" value="GATase1_GMP_Synthase"/>
    <property type="match status" value="1"/>
</dbReference>
<dbReference type="CDD" id="cd01997">
    <property type="entry name" value="GMP_synthase_C"/>
    <property type="match status" value="1"/>
</dbReference>
<dbReference type="FunFam" id="3.30.300.10:FF:000002">
    <property type="entry name" value="GMP synthase [glutamine-hydrolyzing]"/>
    <property type="match status" value="1"/>
</dbReference>
<dbReference type="FunFam" id="3.40.50.620:FF:000001">
    <property type="entry name" value="GMP synthase [glutamine-hydrolyzing]"/>
    <property type="match status" value="1"/>
</dbReference>
<dbReference type="FunFam" id="3.40.50.880:FF:000001">
    <property type="entry name" value="GMP synthase [glutamine-hydrolyzing]"/>
    <property type="match status" value="1"/>
</dbReference>
<dbReference type="Gene3D" id="3.30.300.10">
    <property type="match status" value="1"/>
</dbReference>
<dbReference type="Gene3D" id="3.40.50.880">
    <property type="match status" value="1"/>
</dbReference>
<dbReference type="Gene3D" id="3.40.50.620">
    <property type="entry name" value="HUPs"/>
    <property type="match status" value="1"/>
</dbReference>
<dbReference type="HAMAP" id="MF_00344">
    <property type="entry name" value="GMP_synthase"/>
    <property type="match status" value="1"/>
</dbReference>
<dbReference type="InterPro" id="IPR029062">
    <property type="entry name" value="Class_I_gatase-like"/>
</dbReference>
<dbReference type="InterPro" id="IPR017926">
    <property type="entry name" value="GATASE"/>
</dbReference>
<dbReference type="InterPro" id="IPR001674">
    <property type="entry name" value="GMP_synth_C"/>
</dbReference>
<dbReference type="InterPro" id="IPR004739">
    <property type="entry name" value="GMP_synth_GATase"/>
</dbReference>
<dbReference type="InterPro" id="IPR022955">
    <property type="entry name" value="GMP_synthase"/>
</dbReference>
<dbReference type="InterPro" id="IPR025777">
    <property type="entry name" value="GMPS_ATP_PPase_dom"/>
</dbReference>
<dbReference type="InterPro" id="IPR022310">
    <property type="entry name" value="NAD/GMP_synthase"/>
</dbReference>
<dbReference type="InterPro" id="IPR014729">
    <property type="entry name" value="Rossmann-like_a/b/a_fold"/>
</dbReference>
<dbReference type="NCBIfam" id="TIGR00884">
    <property type="entry name" value="guaA_Cterm"/>
    <property type="match status" value="1"/>
</dbReference>
<dbReference type="NCBIfam" id="TIGR00888">
    <property type="entry name" value="guaA_Nterm"/>
    <property type="match status" value="1"/>
</dbReference>
<dbReference type="NCBIfam" id="NF000848">
    <property type="entry name" value="PRK00074.1"/>
    <property type="match status" value="1"/>
</dbReference>
<dbReference type="PANTHER" id="PTHR11922:SF2">
    <property type="entry name" value="GMP SYNTHASE [GLUTAMINE-HYDROLYZING]"/>
    <property type="match status" value="1"/>
</dbReference>
<dbReference type="PANTHER" id="PTHR11922">
    <property type="entry name" value="GMP SYNTHASE-RELATED"/>
    <property type="match status" value="1"/>
</dbReference>
<dbReference type="Pfam" id="PF00117">
    <property type="entry name" value="GATase"/>
    <property type="match status" value="1"/>
</dbReference>
<dbReference type="Pfam" id="PF00958">
    <property type="entry name" value="GMP_synt_C"/>
    <property type="match status" value="1"/>
</dbReference>
<dbReference type="Pfam" id="PF02540">
    <property type="entry name" value="NAD_synthase"/>
    <property type="match status" value="1"/>
</dbReference>
<dbReference type="PRINTS" id="PR00097">
    <property type="entry name" value="ANTSNTHASEII"/>
</dbReference>
<dbReference type="PRINTS" id="PR00099">
    <property type="entry name" value="CPSGATASE"/>
</dbReference>
<dbReference type="PRINTS" id="PR00096">
    <property type="entry name" value="GATASE"/>
</dbReference>
<dbReference type="SUPFAM" id="SSF52402">
    <property type="entry name" value="Adenine nucleotide alpha hydrolases-like"/>
    <property type="match status" value="1"/>
</dbReference>
<dbReference type="SUPFAM" id="SSF52317">
    <property type="entry name" value="Class I glutamine amidotransferase-like"/>
    <property type="match status" value="1"/>
</dbReference>
<dbReference type="SUPFAM" id="SSF54810">
    <property type="entry name" value="GMP synthetase C-terminal dimerisation domain"/>
    <property type="match status" value="1"/>
</dbReference>
<dbReference type="PROSITE" id="PS51273">
    <property type="entry name" value="GATASE_TYPE_1"/>
    <property type="match status" value="1"/>
</dbReference>
<dbReference type="PROSITE" id="PS51553">
    <property type="entry name" value="GMPS_ATP_PPASE"/>
    <property type="match status" value="1"/>
</dbReference>
<evidence type="ECO:0000255" key="1">
    <source>
        <dbReference type="HAMAP-Rule" id="MF_00344"/>
    </source>
</evidence>
<sequence length="525" mass="58182">MSNIHEHKILILDFGSQYTQLIARRIREIGVYCELWAWDVSEEQIREFAPNGIILAGGPESVTAENSPRAPEYVFNAGVPVLGICYGMQTMSEQLGGKVIQGVGEGEFGYAQVEVQTESALFKAIEDAVSETGKPLLDVWMSHGDKVSAIPEGFVAVAKTETCPFAAMANEDKQFYGVQFHPEVTHTRQGKRMLEHFALEICACAANWKPASIIEDAIERLKAQIGDDEVILGLSGGVDSSVVAMLLHRAIGDKLTCVFVDNGLLRLNEAEQVMEMFGDHFGLNIVHVDAENRFLDAMAGEAEPEAKRKIIGRVFVEIFDEESKKCVNAKWLAQGTIYPDVIESAGSATGKAHCIKSHHNVGGLPDDMEMGLVEPLRELFKDEVRKIGLELGLPYNMLYRHPFPGPGLGVRVLGEVKKEYCDLLRLADAIFIEELHKADLYNKVSQAFTVFLPVRSVGVMGDGRKYDWVVSLRAVETIDFMTAHWAHLPYDFLGRVSNRIINEVNGISRVVYDISGKPPATIEWE</sequence>